<feature type="propeptide" id="PRO_0000459154" description="Activation peptide" evidence="10">
    <location>
        <begin position="1"/>
        <end status="unknown"/>
    </location>
</feature>
<feature type="chain" id="PRO_0000459155" description="Berghepain-1">
    <location>
        <begin status="unknown"/>
        <end position="519"/>
    </location>
</feature>
<feature type="topological domain" description="Cytoplasmic" evidence="10">
    <location>
        <begin position="1"/>
        <end position="32"/>
    </location>
</feature>
<feature type="transmembrane region" description="Helical; Signal-anchor for type II membrane protein" evidence="3">
    <location>
        <begin position="33"/>
        <end position="53"/>
    </location>
</feature>
<feature type="topological domain" description="Lumenal" evidence="10">
    <location>
        <begin position="54"/>
        <end position="519"/>
    </location>
</feature>
<feature type="active site" evidence="5">
    <location>
        <position position="301"/>
    </location>
</feature>
<feature type="active site" evidence="6">
    <location>
        <position position="433"/>
    </location>
</feature>
<feature type="active site" evidence="7">
    <location>
        <position position="483"/>
    </location>
</feature>
<feature type="glycosylation site" description="N-linked (GlcNAc...) asparagine" evidence="4">
    <location>
        <position position="55"/>
    </location>
</feature>
<feature type="glycosylation site" description="N-linked (GlcNAc...) asparagine" evidence="4">
    <location>
        <position position="143"/>
    </location>
</feature>
<feature type="glycosylation site" description="N-linked (GlcNAc...) asparagine" evidence="4">
    <location>
        <position position="432"/>
    </location>
</feature>
<feature type="disulfide bond" evidence="2">
    <location>
        <begin position="298"/>
        <end position="340"/>
    </location>
</feature>
<feature type="disulfide bond" evidence="2">
    <location>
        <begin position="333"/>
        <end position="373"/>
    </location>
</feature>
<feature type="disulfide bond" evidence="2">
    <location>
        <begin position="358"/>
        <end position="378"/>
    </location>
</feature>
<feature type="disulfide bond" evidence="2">
    <location>
        <begin position="427"/>
        <end position="508"/>
    </location>
</feature>
<gene>
    <name evidence="10" type="primary">BP1</name>
    <name evidence="11" type="ORF">PBANKA_1321700</name>
</gene>
<accession>A0A509APV9</accession>
<protein>
    <recommendedName>
        <fullName evidence="9">Berghepain-1</fullName>
        <ecNumber evidence="1">3.4.22.-</ecNumber>
    </recommendedName>
    <alternativeName>
        <fullName evidence="9">Cysteine proteinase berghepain-1</fullName>
    </alternativeName>
</protein>
<proteinExistence type="evidence at protein level"/>
<reference evidence="12" key="1">
    <citation type="journal article" date="2014" name="BMC Biol.">
        <title>A comprehensive evaluation of rodent malaria parasite genomes and gene expression.</title>
        <authorList>
            <person name="Otto T.D."/>
            <person name="Bohme U."/>
            <person name="Jackson A.P."/>
            <person name="Hunt M."/>
            <person name="Franke-Fayard B."/>
            <person name="Hoeijmakers W.A."/>
            <person name="Religa A.A."/>
            <person name="Robertson L."/>
            <person name="Sanders M."/>
            <person name="Ogun S.A."/>
            <person name="Cunningham D."/>
            <person name="Erhart A."/>
            <person name="Billker O."/>
            <person name="Khan S.M."/>
            <person name="Stunnenberg H.G."/>
            <person name="Langhorne J."/>
            <person name="Holder A.A."/>
            <person name="Waters A.P."/>
            <person name="Newbold C.I."/>
            <person name="Pain A."/>
            <person name="Berriman M."/>
            <person name="Janse C.J."/>
        </authorList>
    </citation>
    <scope>NUCLEOTIDE SEQUENCE [LARGE SCALE GENOMIC DNA]</scope>
    <source>
        <strain evidence="12">ANKA</strain>
    </source>
</reference>
<reference evidence="10" key="2">
    <citation type="journal article" date="2017" name="PLoS Pathog.">
        <title>Deletion of the rodent malaria ortholog for falcipain-1 highlights differences between hepatic and blood stage merozoites.</title>
        <authorList>
            <person name="Hopp C.S."/>
            <person name="Bennett B.L."/>
            <person name="Mishra S."/>
            <person name="Lehmann C."/>
            <person name="Hanson K.K."/>
            <person name="Lin J.W."/>
            <person name="Rousseau K."/>
            <person name="Carvalho F.A."/>
            <person name="van der Linden W.A."/>
            <person name="Santos N.C."/>
            <person name="Bogyo M."/>
            <person name="Khan S.M."/>
            <person name="Heussler V."/>
            <person name="Sinnis P."/>
        </authorList>
    </citation>
    <scope>FUNCTION</scope>
    <scope>DEVELOPMENTAL STAGE</scope>
    <scope>DISRUPTION PHENOTYPE</scope>
</reference>
<sequence length="519" mass="60311">MINDIRRINITTSSIESLNENSKYLKRNHKRTIKICAYAITTFALFFIVVVYFKNQTNVNDANRNTLAAIDETSLMNKEIAYLREILKKYKTKTNENNEYAYEKNDDINGDGEDEHELLLMLHKFLKNKGNPNKIDRFDINNNDSNKNRGNENIDQINILSQKLESMHDNIKYASKFFKYMKEYNKKYKNIDEQLVRFENFKTNYMKVKKHNEMVGKNGITYVQKVNQFSDFSKEELDSYFKKLLPIPHNLKTKHVVPLKTHLDDNKIKPKEGVLDYPEQRDYREWNILLPPKDQGMCGSCWAFASVGNYEALFAKKYSILPISFSEQQVVDCSSDNFGCDGGHPFLSFLYFLNNGVCFGDNYEYKAHDDFFCLSYRCAYRSKLKKIGNAYPYELIMSLNEVGPITVNVGVSDEFVLYSGGIFDGTCASELNHSVLLVGYGKVKRSLVFEDSHTNVDSNLIKNYKENIKDSDDDYLYYWIIRNSWSSTWGEGGYIRIKRNKLGDDVFCGIGIDVFFPIL</sequence>
<comment type="function">
    <text evidence="1 8">Cysteine protease (By similarity). Required for host hepatocyte-derived merozoite infectivity and to a lesser extent for host erythrocyte-derived merozoite infectivity (PubMed:28922424).</text>
</comment>
<comment type="subcellular location">
    <subcellularLocation>
        <location evidence="3">Membrane</location>
        <topology evidence="3">Single-pass type II membrane protein</topology>
    </subcellularLocation>
</comment>
<comment type="developmental stage">
    <text evidence="8">Expressed during the asexual blood stage in early schizonts and in the individual merozoites in segmented mature schizonts (at protein level) (PubMed:28922424). During the host liver stage, expressed at low levels 24 hours post-infection, expression increases after 36 hours in late hepatic trophozoite stages and is still present at 56 hours post-infection (at protein level) (PubMed:28922424). Not expressed in merosomes (at protein level) (PubMed:28922424).</text>
</comment>
<comment type="disruption phenotype">
    <text evidence="8">During mosquito A.stephensi infection, number of oocysts and salivary gland sporozoites, and sporozoite gliding motility are normal (PubMed:28922424). However, development of blood stage parasitemia is delayed in C57BL/6 and Swiss Webster mice intravenously injected with knockout sporozoites (PubMed:28922424). Parasitemia initially increases but then plateaus for a few days to rise again more rapidly and mice die between days 14 and 19 post-infection with high parasitemia (PubMed:28922424). Preferentially infects host reticulocytes (PubMed:28922424). Sporozoites exit from the host dermis and infection and development in the host liver are normal with no difference in cytomere stage, merozoites and merosome formation (PubMed:28922424).</text>
</comment>
<comment type="similarity">
    <text evidence="10">Belongs to the peptidase C1 family.</text>
</comment>
<evidence type="ECO:0000250" key="1">
    <source>
        <dbReference type="UniProtKB" id="P25805"/>
    </source>
</evidence>
<evidence type="ECO:0000250" key="2">
    <source>
        <dbReference type="UniProtKB" id="Q8I6U4"/>
    </source>
</evidence>
<evidence type="ECO:0000255" key="3"/>
<evidence type="ECO:0000255" key="4">
    <source>
        <dbReference type="PROSITE-ProRule" id="PRU00498"/>
    </source>
</evidence>
<evidence type="ECO:0000255" key="5">
    <source>
        <dbReference type="PROSITE-ProRule" id="PRU10088"/>
    </source>
</evidence>
<evidence type="ECO:0000255" key="6">
    <source>
        <dbReference type="PROSITE-ProRule" id="PRU10089"/>
    </source>
</evidence>
<evidence type="ECO:0000255" key="7">
    <source>
        <dbReference type="PROSITE-ProRule" id="PRU10090"/>
    </source>
</evidence>
<evidence type="ECO:0000269" key="8">
    <source>
    </source>
</evidence>
<evidence type="ECO:0000303" key="9">
    <source>
    </source>
</evidence>
<evidence type="ECO:0000305" key="10"/>
<evidence type="ECO:0000312" key="11">
    <source>
        <dbReference type="EMBL" id="VUC57598.1"/>
    </source>
</evidence>
<evidence type="ECO:0000312" key="12">
    <source>
        <dbReference type="Proteomes" id="UP000074855"/>
    </source>
</evidence>
<keyword id="KW-1015">Disulfide bond</keyword>
<keyword id="KW-0325">Glycoprotein</keyword>
<keyword id="KW-0378">Hydrolase</keyword>
<keyword id="KW-0472">Membrane</keyword>
<keyword id="KW-0645">Protease</keyword>
<keyword id="KW-1185">Reference proteome</keyword>
<keyword id="KW-0735">Signal-anchor</keyword>
<keyword id="KW-0788">Thiol protease</keyword>
<keyword id="KW-0812">Transmembrane</keyword>
<keyword id="KW-1133">Transmembrane helix</keyword>
<keyword id="KW-0865">Zymogen</keyword>
<dbReference type="EC" id="3.4.22.-" evidence="1"/>
<dbReference type="EMBL" id="LK023128">
    <property type="protein sequence ID" value="VUC57598.1"/>
    <property type="molecule type" value="Genomic_DNA"/>
</dbReference>
<dbReference type="SMR" id="A0A509APV9"/>
<dbReference type="STRING" id="5823.A0A509APV9"/>
<dbReference type="VEuPathDB" id="PlasmoDB:PBANKA_1321700"/>
<dbReference type="InParanoid" id="A0A509APV9"/>
<dbReference type="OMA" id="FCLSYRC"/>
<dbReference type="Proteomes" id="UP000074855">
    <property type="component" value="Chromosome 13"/>
</dbReference>
<dbReference type="GO" id="GO:0016020">
    <property type="term" value="C:membrane"/>
    <property type="evidence" value="ECO:0007669"/>
    <property type="project" value="UniProtKB-SubCell"/>
</dbReference>
<dbReference type="GO" id="GO:0008234">
    <property type="term" value="F:cysteine-type peptidase activity"/>
    <property type="evidence" value="ECO:0007669"/>
    <property type="project" value="UniProtKB-KW"/>
</dbReference>
<dbReference type="GO" id="GO:0085017">
    <property type="term" value="P:entry into host cell by a symbiont-containing vacuole"/>
    <property type="evidence" value="ECO:0000315"/>
    <property type="project" value="UniProtKB"/>
</dbReference>
<dbReference type="GO" id="GO:0006508">
    <property type="term" value="P:proteolysis"/>
    <property type="evidence" value="ECO:0007669"/>
    <property type="project" value="UniProtKB-KW"/>
</dbReference>
<dbReference type="CDD" id="cd02248">
    <property type="entry name" value="Peptidase_C1A"/>
    <property type="match status" value="1"/>
</dbReference>
<dbReference type="Gene3D" id="3.90.70.10">
    <property type="entry name" value="Cysteine proteinases"/>
    <property type="match status" value="1"/>
</dbReference>
<dbReference type="InterPro" id="IPR038765">
    <property type="entry name" value="Papain-like_cys_pep_sf"/>
</dbReference>
<dbReference type="InterPro" id="IPR025661">
    <property type="entry name" value="Pept_asp_AS"/>
</dbReference>
<dbReference type="InterPro" id="IPR000169">
    <property type="entry name" value="Pept_cys_AS"/>
</dbReference>
<dbReference type="InterPro" id="IPR025660">
    <property type="entry name" value="Pept_his_AS"/>
</dbReference>
<dbReference type="InterPro" id="IPR013128">
    <property type="entry name" value="Peptidase_C1A"/>
</dbReference>
<dbReference type="InterPro" id="IPR000668">
    <property type="entry name" value="Peptidase_C1A_C"/>
</dbReference>
<dbReference type="InterPro" id="IPR039417">
    <property type="entry name" value="Peptidase_C1A_papain-like"/>
</dbReference>
<dbReference type="InterPro" id="IPR013201">
    <property type="entry name" value="Prot_inhib_I29"/>
</dbReference>
<dbReference type="PANTHER" id="PTHR12411">
    <property type="entry name" value="CYSTEINE PROTEASE FAMILY C1-RELATED"/>
    <property type="match status" value="1"/>
</dbReference>
<dbReference type="Pfam" id="PF08246">
    <property type="entry name" value="Inhibitor_I29"/>
    <property type="match status" value="1"/>
</dbReference>
<dbReference type="Pfam" id="PF00112">
    <property type="entry name" value="Peptidase_C1"/>
    <property type="match status" value="1"/>
</dbReference>
<dbReference type="PRINTS" id="PR00705">
    <property type="entry name" value="PAPAIN"/>
</dbReference>
<dbReference type="SMART" id="SM00848">
    <property type="entry name" value="Inhibitor_I29"/>
    <property type="match status" value="1"/>
</dbReference>
<dbReference type="SMART" id="SM00645">
    <property type="entry name" value="Pept_C1"/>
    <property type="match status" value="1"/>
</dbReference>
<dbReference type="SUPFAM" id="SSF54001">
    <property type="entry name" value="Cysteine proteinases"/>
    <property type="match status" value="1"/>
</dbReference>
<dbReference type="PROSITE" id="PS00640">
    <property type="entry name" value="THIOL_PROTEASE_ASN"/>
    <property type="match status" value="1"/>
</dbReference>
<dbReference type="PROSITE" id="PS00139">
    <property type="entry name" value="THIOL_PROTEASE_CYS"/>
    <property type="match status" value="1"/>
</dbReference>
<dbReference type="PROSITE" id="PS00639">
    <property type="entry name" value="THIOL_PROTEASE_HIS"/>
    <property type="match status" value="1"/>
</dbReference>
<name>BHPC1_PLABA</name>
<organism evidence="12">
    <name type="scientific">Plasmodium berghei (strain Anka)</name>
    <dbReference type="NCBI Taxonomy" id="5823"/>
    <lineage>
        <taxon>Eukaryota</taxon>
        <taxon>Sar</taxon>
        <taxon>Alveolata</taxon>
        <taxon>Apicomplexa</taxon>
        <taxon>Aconoidasida</taxon>
        <taxon>Haemosporida</taxon>
        <taxon>Plasmodiidae</taxon>
        <taxon>Plasmodium</taxon>
        <taxon>Plasmodium (Vinckeia)</taxon>
    </lineage>
</organism>